<proteinExistence type="evidence at protein level"/>
<name>NAC35_ARATH</name>
<sequence length="414" mass="47303">MAIVSSTTSIIPMSNQVNNNEKGIEDNDHRGGQESHVQNEDEADDHDHDMVMPGFRFHPTEEELIEFYLRRKVEGKRFNVELITFLDLYRYDPWELPAMAAIGEKEWYFYVPRDRKYRNGDRPNRVTTSGYWKATGADRMIRSETSRPIGLKKTLVFYSGKAPKGTRTSWIMNEYRLPHHETEKYQKAEISLCRVYKRPGVEDHPSVPRSLSTRHHNHNSSTSSRLALRQQQHHSSSSNHSDNNLNNNNNINNLEKLSTEYSGDGSTTTTTTNSNSDVTIALANQNIYRPMPYDTSNNTLIVSTRNHQDDDETAIVDDLQRLVNYQISDGGNINHQYFQIAQQFHHTQQQNANANALQLVAAATTATTLMPQTQAALAMNMIPAGTIPNNALWDMWNPIVPDGNRDHYTNIPFK</sequence>
<accession>Q9ZVP8</accession>
<accession>Q8H131</accession>
<accession>Q9C5E2</accession>
<reference key="1">
    <citation type="journal article" date="1999" name="Nature">
        <title>Sequence and analysis of chromosome 2 of the plant Arabidopsis thaliana.</title>
        <authorList>
            <person name="Lin X."/>
            <person name="Kaul S."/>
            <person name="Rounsley S.D."/>
            <person name="Shea T.P."/>
            <person name="Benito M.-I."/>
            <person name="Town C.D."/>
            <person name="Fujii C.Y."/>
            <person name="Mason T.M."/>
            <person name="Bowman C.L."/>
            <person name="Barnstead M.E."/>
            <person name="Feldblyum T.V."/>
            <person name="Buell C.R."/>
            <person name="Ketchum K.A."/>
            <person name="Lee J.J."/>
            <person name="Ronning C.M."/>
            <person name="Koo H.L."/>
            <person name="Moffat K.S."/>
            <person name="Cronin L.A."/>
            <person name="Shen M."/>
            <person name="Pai G."/>
            <person name="Van Aken S."/>
            <person name="Umayam L."/>
            <person name="Tallon L.J."/>
            <person name="Gill J.E."/>
            <person name="Adams M.D."/>
            <person name="Carrera A.J."/>
            <person name="Creasy T.H."/>
            <person name="Goodman H.M."/>
            <person name="Somerville C.R."/>
            <person name="Copenhaver G.P."/>
            <person name="Preuss D."/>
            <person name="Nierman W.C."/>
            <person name="White O."/>
            <person name="Eisen J.A."/>
            <person name="Salzberg S.L."/>
            <person name="Fraser C.M."/>
            <person name="Venter J.C."/>
        </authorList>
    </citation>
    <scope>NUCLEOTIDE SEQUENCE [LARGE SCALE GENOMIC DNA]</scope>
    <source>
        <strain>cv. Columbia</strain>
    </source>
</reference>
<reference key="2">
    <citation type="journal article" date="2017" name="Plant J.">
        <title>Araport11: a complete reannotation of the Arabidopsis thaliana reference genome.</title>
        <authorList>
            <person name="Cheng C.Y."/>
            <person name="Krishnakumar V."/>
            <person name="Chan A.P."/>
            <person name="Thibaud-Nissen F."/>
            <person name="Schobel S."/>
            <person name="Town C.D."/>
        </authorList>
    </citation>
    <scope>GENOME REANNOTATION</scope>
    <source>
        <strain>cv. Columbia</strain>
    </source>
</reference>
<reference key="3">
    <citation type="journal article" date="2003" name="Science">
        <title>Empirical analysis of transcriptional activity in the Arabidopsis genome.</title>
        <authorList>
            <person name="Yamada K."/>
            <person name="Lim J."/>
            <person name="Dale J.M."/>
            <person name="Chen H."/>
            <person name="Shinn P."/>
            <person name="Palm C.J."/>
            <person name="Southwick A.M."/>
            <person name="Wu H.C."/>
            <person name="Kim C.J."/>
            <person name="Nguyen M."/>
            <person name="Pham P.K."/>
            <person name="Cheuk R.F."/>
            <person name="Karlin-Newmann G."/>
            <person name="Liu S.X."/>
            <person name="Lam B."/>
            <person name="Sakano H."/>
            <person name="Wu T."/>
            <person name="Yu G."/>
            <person name="Miranda M."/>
            <person name="Quach H.L."/>
            <person name="Tripp M."/>
            <person name="Chang C.H."/>
            <person name="Lee J.M."/>
            <person name="Toriumi M.J."/>
            <person name="Chan M.M."/>
            <person name="Tang C.C."/>
            <person name="Onodera C.S."/>
            <person name="Deng J.M."/>
            <person name="Akiyama K."/>
            <person name="Ansari Y."/>
            <person name="Arakawa T."/>
            <person name="Banh J."/>
            <person name="Banno F."/>
            <person name="Bowser L."/>
            <person name="Brooks S.Y."/>
            <person name="Carninci P."/>
            <person name="Chao Q."/>
            <person name="Choy N."/>
            <person name="Enju A."/>
            <person name="Goldsmith A.D."/>
            <person name="Gurjal M."/>
            <person name="Hansen N.F."/>
            <person name="Hayashizaki Y."/>
            <person name="Johnson-Hopson C."/>
            <person name="Hsuan V.W."/>
            <person name="Iida K."/>
            <person name="Karnes M."/>
            <person name="Khan S."/>
            <person name="Koesema E."/>
            <person name="Ishida J."/>
            <person name="Jiang P.X."/>
            <person name="Jones T."/>
            <person name="Kawai J."/>
            <person name="Kamiya A."/>
            <person name="Meyers C."/>
            <person name="Nakajima M."/>
            <person name="Narusaka M."/>
            <person name="Seki M."/>
            <person name="Sakurai T."/>
            <person name="Satou M."/>
            <person name="Tamse R."/>
            <person name="Vaysberg M."/>
            <person name="Wallender E.K."/>
            <person name="Wong C."/>
            <person name="Yamamura Y."/>
            <person name="Yuan S."/>
            <person name="Shinozaki K."/>
            <person name="Davis R.W."/>
            <person name="Theologis A."/>
            <person name="Ecker J.R."/>
        </authorList>
    </citation>
    <scope>NUCLEOTIDE SEQUENCE [LARGE SCALE MRNA] (ISOFORM 2)</scope>
    <source>
        <strain>cv. Columbia</strain>
    </source>
</reference>
<reference key="4">
    <citation type="journal article" date="2003" name="DNA Res.">
        <title>Comprehensive analysis of NAC family genes in Oryza sativa and Arabidopsis thaliana.</title>
        <authorList>
            <person name="Ooka H."/>
            <person name="Satoh K."/>
            <person name="Doi K."/>
            <person name="Nagata T."/>
            <person name="Otomo Y."/>
            <person name="Murakami K."/>
            <person name="Matsubara K."/>
            <person name="Osato N."/>
            <person name="Kawai J."/>
            <person name="Carninci P."/>
            <person name="Hayashizaki Y."/>
            <person name="Suzuki K."/>
            <person name="Kojima K."/>
            <person name="Takahara Y."/>
            <person name="Yamamoto K."/>
            <person name="Kikuchi S."/>
        </authorList>
    </citation>
    <scope>GENE FAMILY</scope>
    <scope>NOMENCLATURE</scope>
</reference>
<reference key="5">
    <citation type="journal article" date="2007" name="PLoS ONE">
        <title>Control of flowering time and cold response by a NAC-domain protein in Arabidopsis.</title>
        <authorList>
            <person name="Yoo S.Y."/>
            <person name="Kim Y."/>
            <person name="Kim S.Y."/>
            <person name="Lee J.S."/>
            <person name="Ahn J.H."/>
        </authorList>
    </citation>
    <scope>FUNCTION</scope>
    <scope>SUBCELLULAR LOCATION</scope>
    <scope>TISSUE SPECIFICITY</scope>
    <scope>INDUCTION</scope>
    <scope>DISRUPTION PHENOTYPE</scope>
</reference>
<keyword id="KW-0025">Alternative splicing</keyword>
<keyword id="KW-0238">DNA-binding</keyword>
<keyword id="KW-0287">Flowering</keyword>
<keyword id="KW-0539">Nucleus</keyword>
<keyword id="KW-1185">Reference proteome</keyword>
<keyword id="KW-0678">Repressor</keyword>
<keyword id="KW-0346">Stress response</keyword>
<keyword id="KW-0804">Transcription</keyword>
<keyword id="KW-0805">Transcription regulation</keyword>
<organism>
    <name type="scientific">Arabidopsis thaliana</name>
    <name type="common">Mouse-ear cress</name>
    <dbReference type="NCBI Taxonomy" id="3702"/>
    <lineage>
        <taxon>Eukaryota</taxon>
        <taxon>Viridiplantae</taxon>
        <taxon>Streptophyta</taxon>
        <taxon>Embryophyta</taxon>
        <taxon>Tracheophyta</taxon>
        <taxon>Spermatophyta</taxon>
        <taxon>Magnoliopsida</taxon>
        <taxon>eudicotyledons</taxon>
        <taxon>Gunneridae</taxon>
        <taxon>Pentapetalae</taxon>
        <taxon>rosids</taxon>
        <taxon>malvids</taxon>
        <taxon>Brassicales</taxon>
        <taxon>Brassicaceae</taxon>
        <taxon>Camelineae</taxon>
        <taxon>Arabidopsis</taxon>
    </lineage>
</organism>
<gene>
    <name evidence="7" type="primary">NAC035</name>
    <name evidence="6" type="ordered locus">At2g02450</name>
</gene>
<feature type="chain" id="PRO_0000436556" description="NAC domain-containing protein 35">
    <location>
        <begin position="1"/>
        <end position="414"/>
    </location>
</feature>
<feature type="domain" description="NAC" evidence="1">
    <location>
        <begin position="51"/>
        <end position="198"/>
    </location>
</feature>
<feature type="DNA-binding region" evidence="1">
    <location>
        <begin position="149"/>
        <end position="204"/>
    </location>
</feature>
<feature type="region of interest" description="Disordered" evidence="2">
    <location>
        <begin position="1"/>
        <end position="47"/>
    </location>
</feature>
<feature type="region of interest" description="Disordered" evidence="2">
    <location>
        <begin position="200"/>
        <end position="251"/>
    </location>
</feature>
<feature type="compositionally biased region" description="Polar residues" evidence="2">
    <location>
        <begin position="1"/>
        <end position="21"/>
    </location>
</feature>
<feature type="compositionally biased region" description="Basic and acidic residues" evidence="2">
    <location>
        <begin position="22"/>
        <end position="47"/>
    </location>
</feature>
<feature type="compositionally biased region" description="Low complexity" evidence="2">
    <location>
        <begin position="233"/>
        <end position="251"/>
    </location>
</feature>
<feature type="splice variant" id="VSP_058389" description="In isoform 2.">
    <location>
        <begin position="331"/>
        <end position="365"/>
    </location>
</feature>
<dbReference type="EMBL" id="AC005312">
    <property type="protein sequence ID" value="AAC78526.2"/>
    <property type="molecule type" value="Genomic_DNA"/>
</dbReference>
<dbReference type="EMBL" id="CP002685">
    <property type="protein sequence ID" value="AEC05581.1"/>
    <property type="molecule type" value="Genomic_DNA"/>
</dbReference>
<dbReference type="EMBL" id="CP002685">
    <property type="protein sequence ID" value="AEC05582.1"/>
    <property type="molecule type" value="Genomic_DNA"/>
</dbReference>
<dbReference type="EMBL" id="AF360308">
    <property type="protein sequence ID" value="AAK26018.2"/>
    <property type="molecule type" value="mRNA"/>
</dbReference>
<dbReference type="EMBL" id="BT000874">
    <property type="protein sequence ID" value="AAN41274.1"/>
    <property type="molecule type" value="mRNA"/>
</dbReference>
<dbReference type="PIR" id="G84436">
    <property type="entry name" value="G84436"/>
</dbReference>
<dbReference type="PIR" id="H84436">
    <property type="entry name" value="H84436"/>
</dbReference>
<dbReference type="RefSeq" id="NP_565284.3">
    <molecule id="Q9ZVP8-1"/>
    <property type="nucleotide sequence ID" value="NM_126301.4"/>
</dbReference>
<dbReference type="RefSeq" id="NP_850986.1">
    <molecule id="Q9ZVP8-2"/>
    <property type="nucleotide sequence ID" value="NM_180655.2"/>
</dbReference>
<dbReference type="SMR" id="Q9ZVP8"/>
<dbReference type="FunCoup" id="Q9ZVP8">
    <property type="interactions" value="491"/>
</dbReference>
<dbReference type="IntAct" id="Q9ZVP8">
    <property type="interactions" value="29"/>
</dbReference>
<dbReference type="STRING" id="3702.Q9ZVP8"/>
<dbReference type="iPTMnet" id="Q9ZVP8"/>
<dbReference type="PaxDb" id="3702-AT2G02450.2"/>
<dbReference type="ProteomicsDB" id="251277">
    <molecule id="Q9ZVP8-1"/>
</dbReference>
<dbReference type="EnsemblPlants" id="AT2G02450.1">
    <molecule id="Q9ZVP8-2"/>
    <property type="protein sequence ID" value="AT2G02450.1"/>
    <property type="gene ID" value="AT2G02450"/>
</dbReference>
<dbReference type="EnsemblPlants" id="AT2G02450.2">
    <molecule id="Q9ZVP8-1"/>
    <property type="protein sequence ID" value="AT2G02450.2"/>
    <property type="gene ID" value="AT2G02450"/>
</dbReference>
<dbReference type="GeneID" id="814775"/>
<dbReference type="Gramene" id="AT2G02450.1">
    <molecule id="Q9ZVP8-2"/>
    <property type="protein sequence ID" value="AT2G02450.1"/>
    <property type="gene ID" value="AT2G02450"/>
</dbReference>
<dbReference type="Gramene" id="AT2G02450.2">
    <molecule id="Q9ZVP8-1"/>
    <property type="protein sequence ID" value="AT2G02450.2"/>
    <property type="gene ID" value="AT2G02450"/>
</dbReference>
<dbReference type="KEGG" id="ath:AT2G02450"/>
<dbReference type="Araport" id="AT2G02450"/>
<dbReference type="TAIR" id="AT2G02450">
    <property type="gene designation" value="LOV1"/>
</dbReference>
<dbReference type="eggNOG" id="ENOG502QVXP">
    <property type="taxonomic scope" value="Eukaryota"/>
</dbReference>
<dbReference type="InParanoid" id="Q9ZVP8"/>
<dbReference type="OMA" id="HYINIPF"/>
<dbReference type="PhylomeDB" id="Q9ZVP8"/>
<dbReference type="PRO" id="PR:Q9ZVP8"/>
<dbReference type="Proteomes" id="UP000006548">
    <property type="component" value="Chromosome 2"/>
</dbReference>
<dbReference type="ExpressionAtlas" id="Q9ZVP8">
    <property type="expression patterns" value="baseline and differential"/>
</dbReference>
<dbReference type="GO" id="GO:0005634">
    <property type="term" value="C:nucleus"/>
    <property type="evidence" value="ECO:0007669"/>
    <property type="project" value="UniProtKB-SubCell"/>
</dbReference>
<dbReference type="GO" id="GO:0003677">
    <property type="term" value="F:DNA binding"/>
    <property type="evidence" value="ECO:0007669"/>
    <property type="project" value="UniProtKB-KW"/>
</dbReference>
<dbReference type="GO" id="GO:0003700">
    <property type="term" value="F:DNA-binding transcription factor activity"/>
    <property type="evidence" value="ECO:0000250"/>
    <property type="project" value="TAIR"/>
</dbReference>
<dbReference type="GO" id="GO:0009908">
    <property type="term" value="P:flower development"/>
    <property type="evidence" value="ECO:0007669"/>
    <property type="project" value="UniProtKB-KW"/>
</dbReference>
<dbReference type="FunFam" id="2.170.150.80:FF:000007">
    <property type="entry name" value="NAC domain-containing protein 35"/>
    <property type="match status" value="1"/>
</dbReference>
<dbReference type="Gene3D" id="2.170.150.80">
    <property type="entry name" value="NAC domain"/>
    <property type="match status" value="1"/>
</dbReference>
<dbReference type="InterPro" id="IPR003441">
    <property type="entry name" value="NAC-dom"/>
</dbReference>
<dbReference type="InterPro" id="IPR036093">
    <property type="entry name" value="NAC_dom_sf"/>
</dbReference>
<dbReference type="PANTHER" id="PTHR31744:SF79">
    <property type="entry name" value="NAC DOMAIN-CONTAINING PROTEIN"/>
    <property type="match status" value="1"/>
</dbReference>
<dbReference type="PANTHER" id="PTHR31744">
    <property type="entry name" value="PROTEIN CUP-SHAPED COTYLEDON 2-RELATED"/>
    <property type="match status" value="1"/>
</dbReference>
<dbReference type="Pfam" id="PF02365">
    <property type="entry name" value="NAM"/>
    <property type="match status" value="1"/>
</dbReference>
<dbReference type="SUPFAM" id="SSF101941">
    <property type="entry name" value="NAC domain"/>
    <property type="match status" value="1"/>
</dbReference>
<dbReference type="PROSITE" id="PS51005">
    <property type="entry name" value="NAC"/>
    <property type="match status" value="1"/>
</dbReference>
<comment type="function">
    <text evidence="3">Transcription factor that acts as a floral repressor. Controls flowering time by negatively regulating CONSTANS (CO) expression in a GIGANTEA (GI)-independent manner. Regulates the plant cold response by positive regulation of the cold response genes COR15A and KIN1. May coordinate cold response and flowering time.</text>
</comment>
<comment type="subcellular location">
    <subcellularLocation>
        <location evidence="1 3">Nucleus</location>
    </subcellularLocation>
</comment>
<comment type="alternative products">
    <event type="alternative splicing"/>
    <isoform>
        <id>Q9ZVP8-1</id>
        <name>1</name>
        <sequence type="displayed"/>
    </isoform>
    <isoform>
        <id>Q9ZVP8-2</id>
        <name>2</name>
        <sequence type="described" ref="VSP_058389"/>
    </isoform>
</comment>
<comment type="tissue specificity">
    <text evidence="3">Expressed in aerial organs in early stages of seedling development.</text>
</comment>
<comment type="induction">
    <text evidence="3">Circadian regulation with a peak of expression at dawn under continuous light conditions (PubMed:17653269). Circadian regulation with a peak of expression around dusk and lowest expression around dawn under continuous light conditions (at protein level) (PubMed:17653269).</text>
</comment>
<comment type="domain">
    <text evidence="1">The NAC domain includes a DNA binding domain and a dimerization domain.</text>
</comment>
<comment type="disruption phenotype">
    <text evidence="3">Early flowering phenotype under long-day conditions. Hypersensitivity to cold.</text>
</comment>
<comment type="miscellaneous">
    <text evidence="3">The gain-of-function mutant lov1-1D (T-DNA tagging) shows a late-flowering phenotype under long-day conditions, and freezing tolerance.</text>
</comment>
<protein>
    <recommendedName>
        <fullName evidence="4">NAC domain-containing protein 35</fullName>
        <shortName evidence="4">ANAC035</shortName>
    </recommendedName>
    <alternativeName>
        <fullName evidence="5">Protein LONG VEGETATIVE PHASE 1</fullName>
        <shortName evidence="5">AtLOV1</shortName>
    </alternativeName>
</protein>
<evidence type="ECO:0000255" key="1">
    <source>
        <dbReference type="PROSITE-ProRule" id="PRU00353"/>
    </source>
</evidence>
<evidence type="ECO:0000256" key="2">
    <source>
        <dbReference type="SAM" id="MobiDB-lite"/>
    </source>
</evidence>
<evidence type="ECO:0000269" key="3">
    <source>
    </source>
</evidence>
<evidence type="ECO:0000303" key="4">
    <source>
    </source>
</evidence>
<evidence type="ECO:0000303" key="5">
    <source>
    </source>
</evidence>
<evidence type="ECO:0000312" key="6">
    <source>
        <dbReference type="Araport" id="AT2G02450"/>
    </source>
</evidence>
<evidence type="ECO:0000312" key="7">
    <source>
        <dbReference type="EMBL" id="AEC05581.1"/>
    </source>
</evidence>